<comment type="function">
    <text evidence="1">Catalyzes the GTP-dependent ribosomal translocation step during translation elongation. During this step, the ribosome changes from the pre-translocational (PRE) to the post-translocational (POST) state as the newly formed A-site-bound peptidyl-tRNA and P-site-bound deacylated tRNA move to the P and E sites, respectively. Catalyzes the coordinated movement of the two tRNA molecules, the mRNA and conformational changes in the ribosome.</text>
</comment>
<comment type="subcellular location">
    <subcellularLocation>
        <location evidence="1">Cytoplasm</location>
    </subcellularLocation>
</comment>
<comment type="similarity">
    <text evidence="1">Belongs to the TRAFAC class translation factor GTPase superfamily. Classic translation factor GTPase family. EF-G/EF-2 subfamily.</text>
</comment>
<protein>
    <recommendedName>
        <fullName evidence="1">Elongation factor G 2</fullName>
        <shortName evidence="1">EF-G 2</shortName>
    </recommendedName>
</protein>
<name>EFG2_BURP1</name>
<sequence length="700" mass="77446">MARKTPIERYRNIGISAHIDAGKTTTTERILFYTGVNHKIGEVHDGAATMDWMEQEQERGITITSAATTAFWKGMGNNYPEHRINIIDTPGHVDFTIEVERSMRVLDGACMVYCAVGGVQPQSETVWRQANKYKVPRLAFVNKMDRTGANFFKVYDQLKLRLKANPVPVVVPIGAEENFKGVVDLLKMKAIIWDEASQGTKFDYVDIPAELADTCQEWREKMVEAAAEASEDLMNKYLEEGDLPEADIVKALRDRTIACEIQPMLCGTAFKNKGVQRMLDAVIDFLPSPVDIPPVKGELESGEAAERQASDEEKFSSLAFKIMTDPFVGQLIFFRVYSGVVNSGDTLLNSTKGKKERLGRILQMHANQREEIKEVRAGDIAAAVGLKEATTGDTLCDPAHPIVLERMVFPEPVISQAVEPKTKADQEKMGLALNRLAQEDPSFRVQTDEESGQTIISGMGELHLEILVDRMKREFGVEATVGKPQVAYRETIRSTAKDVDGKFVKQSGGRGQYGHAVITLEPNEQGKGYEFFDEIKGGVIPREYIPAVDKGIQDTLKSGVLAGFPVVDVKVHLTFGSYHDVDSNENAFRMAGSMAFKEAMRRANPVVLEPMMAVEVETPEDYMGNVMGDLSGRRGIVQGMEDMVGGGKIVRAEVPLSEMFGYSTSLRSLTQGRATYTMEFKHYAEAPKNVADAIISAKSK</sequence>
<accession>Q3JMR0</accession>
<feature type="chain" id="PRO_0000225197" description="Elongation factor G 2">
    <location>
        <begin position="1"/>
        <end position="700"/>
    </location>
</feature>
<feature type="domain" description="tr-type G">
    <location>
        <begin position="8"/>
        <end position="290"/>
    </location>
</feature>
<feature type="binding site" evidence="1">
    <location>
        <begin position="17"/>
        <end position="24"/>
    </location>
    <ligand>
        <name>GTP</name>
        <dbReference type="ChEBI" id="CHEBI:37565"/>
    </ligand>
</feature>
<feature type="binding site" evidence="1">
    <location>
        <begin position="88"/>
        <end position="92"/>
    </location>
    <ligand>
        <name>GTP</name>
        <dbReference type="ChEBI" id="CHEBI:37565"/>
    </ligand>
</feature>
<feature type="binding site" evidence="1">
    <location>
        <begin position="142"/>
        <end position="145"/>
    </location>
    <ligand>
        <name>GTP</name>
        <dbReference type="ChEBI" id="CHEBI:37565"/>
    </ligand>
</feature>
<organism>
    <name type="scientific">Burkholderia pseudomallei (strain 1710b)</name>
    <dbReference type="NCBI Taxonomy" id="320372"/>
    <lineage>
        <taxon>Bacteria</taxon>
        <taxon>Pseudomonadati</taxon>
        <taxon>Pseudomonadota</taxon>
        <taxon>Betaproteobacteria</taxon>
        <taxon>Burkholderiales</taxon>
        <taxon>Burkholderiaceae</taxon>
        <taxon>Burkholderia</taxon>
        <taxon>pseudomallei group</taxon>
    </lineage>
</organism>
<evidence type="ECO:0000255" key="1">
    <source>
        <dbReference type="HAMAP-Rule" id="MF_00054"/>
    </source>
</evidence>
<keyword id="KW-0963">Cytoplasm</keyword>
<keyword id="KW-0251">Elongation factor</keyword>
<keyword id="KW-0342">GTP-binding</keyword>
<keyword id="KW-0547">Nucleotide-binding</keyword>
<keyword id="KW-0648">Protein biosynthesis</keyword>
<dbReference type="EMBL" id="CP000124">
    <property type="protein sequence ID" value="ABA51117.1"/>
    <property type="molecule type" value="Genomic_DNA"/>
</dbReference>
<dbReference type="SMR" id="Q3JMR0"/>
<dbReference type="EnsemblBacteria" id="ABA51117">
    <property type="protein sequence ID" value="ABA51117"/>
    <property type="gene ID" value="BURPS1710b_3779"/>
</dbReference>
<dbReference type="KEGG" id="bpm:BURPS1710b_3779"/>
<dbReference type="HOGENOM" id="CLU_002794_4_1_4"/>
<dbReference type="Proteomes" id="UP000002700">
    <property type="component" value="Chromosome I"/>
</dbReference>
<dbReference type="GO" id="GO:0005737">
    <property type="term" value="C:cytoplasm"/>
    <property type="evidence" value="ECO:0007669"/>
    <property type="project" value="UniProtKB-SubCell"/>
</dbReference>
<dbReference type="GO" id="GO:0005525">
    <property type="term" value="F:GTP binding"/>
    <property type="evidence" value="ECO:0007669"/>
    <property type="project" value="UniProtKB-UniRule"/>
</dbReference>
<dbReference type="GO" id="GO:0003924">
    <property type="term" value="F:GTPase activity"/>
    <property type="evidence" value="ECO:0007669"/>
    <property type="project" value="InterPro"/>
</dbReference>
<dbReference type="GO" id="GO:0097216">
    <property type="term" value="F:guanosine tetraphosphate binding"/>
    <property type="evidence" value="ECO:0007669"/>
    <property type="project" value="UniProtKB-ARBA"/>
</dbReference>
<dbReference type="GO" id="GO:0003746">
    <property type="term" value="F:translation elongation factor activity"/>
    <property type="evidence" value="ECO:0007669"/>
    <property type="project" value="UniProtKB-UniRule"/>
</dbReference>
<dbReference type="GO" id="GO:0032790">
    <property type="term" value="P:ribosome disassembly"/>
    <property type="evidence" value="ECO:0007669"/>
    <property type="project" value="TreeGrafter"/>
</dbReference>
<dbReference type="CDD" id="cd01886">
    <property type="entry name" value="EF-G"/>
    <property type="match status" value="1"/>
</dbReference>
<dbReference type="CDD" id="cd16262">
    <property type="entry name" value="EFG_III"/>
    <property type="match status" value="1"/>
</dbReference>
<dbReference type="CDD" id="cd01434">
    <property type="entry name" value="EFG_mtEFG1_IV"/>
    <property type="match status" value="1"/>
</dbReference>
<dbReference type="CDD" id="cd03713">
    <property type="entry name" value="EFG_mtEFG_C"/>
    <property type="match status" value="1"/>
</dbReference>
<dbReference type="CDD" id="cd04088">
    <property type="entry name" value="EFG_mtEFG_II"/>
    <property type="match status" value="1"/>
</dbReference>
<dbReference type="FunFam" id="2.40.30.10:FF:000006">
    <property type="entry name" value="Elongation factor G"/>
    <property type="match status" value="1"/>
</dbReference>
<dbReference type="FunFam" id="3.30.230.10:FF:000003">
    <property type="entry name" value="Elongation factor G"/>
    <property type="match status" value="1"/>
</dbReference>
<dbReference type="FunFam" id="3.30.70.240:FF:000001">
    <property type="entry name" value="Elongation factor G"/>
    <property type="match status" value="1"/>
</dbReference>
<dbReference type="FunFam" id="3.30.70.870:FF:000001">
    <property type="entry name" value="Elongation factor G"/>
    <property type="match status" value="1"/>
</dbReference>
<dbReference type="FunFam" id="3.40.50.300:FF:000029">
    <property type="entry name" value="Elongation factor G"/>
    <property type="match status" value="1"/>
</dbReference>
<dbReference type="Gene3D" id="3.30.230.10">
    <property type="match status" value="1"/>
</dbReference>
<dbReference type="Gene3D" id="3.30.70.240">
    <property type="match status" value="1"/>
</dbReference>
<dbReference type="Gene3D" id="3.30.70.870">
    <property type="entry name" value="Elongation Factor G (Translational Gtpase), domain 3"/>
    <property type="match status" value="1"/>
</dbReference>
<dbReference type="Gene3D" id="3.40.50.300">
    <property type="entry name" value="P-loop containing nucleotide triphosphate hydrolases"/>
    <property type="match status" value="1"/>
</dbReference>
<dbReference type="Gene3D" id="2.40.30.10">
    <property type="entry name" value="Translation factors"/>
    <property type="match status" value="1"/>
</dbReference>
<dbReference type="HAMAP" id="MF_00054_B">
    <property type="entry name" value="EF_G_EF_2_B"/>
    <property type="match status" value="1"/>
</dbReference>
<dbReference type="InterPro" id="IPR041095">
    <property type="entry name" value="EFG_II"/>
</dbReference>
<dbReference type="InterPro" id="IPR009022">
    <property type="entry name" value="EFG_III"/>
</dbReference>
<dbReference type="InterPro" id="IPR035647">
    <property type="entry name" value="EFG_III/V"/>
</dbReference>
<dbReference type="InterPro" id="IPR047872">
    <property type="entry name" value="EFG_IV"/>
</dbReference>
<dbReference type="InterPro" id="IPR035649">
    <property type="entry name" value="EFG_V"/>
</dbReference>
<dbReference type="InterPro" id="IPR000640">
    <property type="entry name" value="EFG_V-like"/>
</dbReference>
<dbReference type="InterPro" id="IPR004161">
    <property type="entry name" value="EFTu-like_2"/>
</dbReference>
<dbReference type="InterPro" id="IPR031157">
    <property type="entry name" value="G_TR_CS"/>
</dbReference>
<dbReference type="InterPro" id="IPR027417">
    <property type="entry name" value="P-loop_NTPase"/>
</dbReference>
<dbReference type="InterPro" id="IPR020568">
    <property type="entry name" value="Ribosomal_Su5_D2-typ_SF"/>
</dbReference>
<dbReference type="InterPro" id="IPR014721">
    <property type="entry name" value="Ribsml_uS5_D2-typ_fold_subgr"/>
</dbReference>
<dbReference type="InterPro" id="IPR005225">
    <property type="entry name" value="Small_GTP-bd"/>
</dbReference>
<dbReference type="InterPro" id="IPR000795">
    <property type="entry name" value="T_Tr_GTP-bd_dom"/>
</dbReference>
<dbReference type="InterPro" id="IPR009000">
    <property type="entry name" value="Transl_B-barrel_sf"/>
</dbReference>
<dbReference type="InterPro" id="IPR004540">
    <property type="entry name" value="Transl_elong_EFG/EF2"/>
</dbReference>
<dbReference type="InterPro" id="IPR005517">
    <property type="entry name" value="Transl_elong_EFG/EF2_IV"/>
</dbReference>
<dbReference type="NCBIfam" id="TIGR00484">
    <property type="entry name" value="EF-G"/>
    <property type="match status" value="1"/>
</dbReference>
<dbReference type="NCBIfam" id="NF009381">
    <property type="entry name" value="PRK12740.1-5"/>
    <property type="match status" value="1"/>
</dbReference>
<dbReference type="NCBIfam" id="TIGR00231">
    <property type="entry name" value="small_GTP"/>
    <property type="match status" value="1"/>
</dbReference>
<dbReference type="PANTHER" id="PTHR43261:SF1">
    <property type="entry name" value="RIBOSOME-RELEASING FACTOR 2, MITOCHONDRIAL"/>
    <property type="match status" value="1"/>
</dbReference>
<dbReference type="PANTHER" id="PTHR43261">
    <property type="entry name" value="TRANSLATION ELONGATION FACTOR G-RELATED"/>
    <property type="match status" value="1"/>
</dbReference>
<dbReference type="Pfam" id="PF00679">
    <property type="entry name" value="EFG_C"/>
    <property type="match status" value="1"/>
</dbReference>
<dbReference type="Pfam" id="PF14492">
    <property type="entry name" value="EFG_III"/>
    <property type="match status" value="1"/>
</dbReference>
<dbReference type="Pfam" id="PF03764">
    <property type="entry name" value="EFG_IV"/>
    <property type="match status" value="1"/>
</dbReference>
<dbReference type="Pfam" id="PF00009">
    <property type="entry name" value="GTP_EFTU"/>
    <property type="match status" value="1"/>
</dbReference>
<dbReference type="Pfam" id="PF03144">
    <property type="entry name" value="GTP_EFTU_D2"/>
    <property type="match status" value="1"/>
</dbReference>
<dbReference type="PRINTS" id="PR00315">
    <property type="entry name" value="ELONGATNFCT"/>
</dbReference>
<dbReference type="SMART" id="SM00838">
    <property type="entry name" value="EFG_C"/>
    <property type="match status" value="1"/>
</dbReference>
<dbReference type="SMART" id="SM00889">
    <property type="entry name" value="EFG_IV"/>
    <property type="match status" value="1"/>
</dbReference>
<dbReference type="SUPFAM" id="SSF54980">
    <property type="entry name" value="EF-G C-terminal domain-like"/>
    <property type="match status" value="2"/>
</dbReference>
<dbReference type="SUPFAM" id="SSF52540">
    <property type="entry name" value="P-loop containing nucleoside triphosphate hydrolases"/>
    <property type="match status" value="1"/>
</dbReference>
<dbReference type="SUPFAM" id="SSF54211">
    <property type="entry name" value="Ribosomal protein S5 domain 2-like"/>
    <property type="match status" value="1"/>
</dbReference>
<dbReference type="SUPFAM" id="SSF50447">
    <property type="entry name" value="Translation proteins"/>
    <property type="match status" value="1"/>
</dbReference>
<dbReference type="PROSITE" id="PS00301">
    <property type="entry name" value="G_TR_1"/>
    <property type="match status" value="1"/>
</dbReference>
<dbReference type="PROSITE" id="PS51722">
    <property type="entry name" value="G_TR_2"/>
    <property type="match status" value="1"/>
</dbReference>
<gene>
    <name evidence="1" type="primary">fusA2</name>
    <name type="ordered locus">BURPS1710b_3779</name>
</gene>
<proteinExistence type="inferred from homology"/>
<reference key="1">
    <citation type="journal article" date="2010" name="Genome Biol. Evol.">
        <title>Continuing evolution of Burkholderia mallei through genome reduction and large-scale rearrangements.</title>
        <authorList>
            <person name="Losada L."/>
            <person name="Ronning C.M."/>
            <person name="DeShazer D."/>
            <person name="Woods D."/>
            <person name="Fedorova N."/>
            <person name="Kim H.S."/>
            <person name="Shabalina S.A."/>
            <person name="Pearson T.R."/>
            <person name="Brinkac L."/>
            <person name="Tan P."/>
            <person name="Nandi T."/>
            <person name="Crabtree J."/>
            <person name="Badger J."/>
            <person name="Beckstrom-Sternberg S."/>
            <person name="Saqib M."/>
            <person name="Schutzer S.E."/>
            <person name="Keim P."/>
            <person name="Nierman W.C."/>
        </authorList>
    </citation>
    <scope>NUCLEOTIDE SEQUENCE [LARGE SCALE GENOMIC DNA]</scope>
    <source>
        <strain>1710b</strain>
    </source>
</reference>